<organism>
    <name type="scientific">Rickettsia canadensis (strain McKiel)</name>
    <dbReference type="NCBI Taxonomy" id="293613"/>
    <lineage>
        <taxon>Bacteria</taxon>
        <taxon>Pseudomonadati</taxon>
        <taxon>Pseudomonadota</taxon>
        <taxon>Alphaproteobacteria</taxon>
        <taxon>Rickettsiales</taxon>
        <taxon>Rickettsiaceae</taxon>
        <taxon>Rickettsieae</taxon>
        <taxon>Rickettsia</taxon>
        <taxon>belli group</taxon>
    </lineage>
</organism>
<name>HSLU_RICCK</name>
<protein>
    <recommendedName>
        <fullName evidence="1">ATP-dependent protease ATPase subunit HslU</fullName>
    </recommendedName>
    <alternativeName>
        <fullName evidence="1">Unfoldase HslU</fullName>
    </alternativeName>
</protein>
<feature type="chain" id="PRO_1000012795" description="ATP-dependent protease ATPase subunit HslU">
    <location>
        <begin position="1"/>
        <end position="450"/>
    </location>
</feature>
<feature type="binding site" evidence="1">
    <location>
        <position position="29"/>
    </location>
    <ligand>
        <name>ATP</name>
        <dbReference type="ChEBI" id="CHEBI:30616"/>
    </ligand>
</feature>
<feature type="binding site" evidence="1">
    <location>
        <begin position="71"/>
        <end position="76"/>
    </location>
    <ligand>
        <name>ATP</name>
        <dbReference type="ChEBI" id="CHEBI:30616"/>
    </ligand>
</feature>
<feature type="binding site" evidence="1">
    <location>
        <position position="261"/>
    </location>
    <ligand>
        <name>ATP</name>
        <dbReference type="ChEBI" id="CHEBI:30616"/>
    </ligand>
</feature>
<feature type="binding site" evidence="1">
    <location>
        <position position="328"/>
    </location>
    <ligand>
        <name>ATP</name>
        <dbReference type="ChEBI" id="CHEBI:30616"/>
    </ligand>
</feature>
<feature type="binding site" evidence="1">
    <location>
        <position position="400"/>
    </location>
    <ligand>
        <name>ATP</name>
        <dbReference type="ChEBI" id="CHEBI:30616"/>
    </ligand>
</feature>
<reference key="1">
    <citation type="submission" date="2007-09" db="EMBL/GenBank/DDBJ databases">
        <title>Complete genome sequence of Rickettsia canadensis.</title>
        <authorList>
            <person name="Madan A."/>
            <person name="Fahey J."/>
            <person name="Helton E."/>
            <person name="Ketteman M."/>
            <person name="Madan A."/>
            <person name="Rodrigues S."/>
            <person name="Sanchez A."/>
            <person name="Whiting M."/>
            <person name="Dasch G."/>
            <person name="Eremeeva M."/>
        </authorList>
    </citation>
    <scope>NUCLEOTIDE SEQUENCE [LARGE SCALE GENOMIC DNA]</scope>
    <source>
        <strain>McKiel</strain>
    </source>
</reference>
<dbReference type="EMBL" id="CP000409">
    <property type="protein sequence ID" value="ABV73715.1"/>
    <property type="molecule type" value="Genomic_DNA"/>
</dbReference>
<dbReference type="RefSeq" id="WP_012148910.1">
    <property type="nucleotide sequence ID" value="NC_009879.1"/>
</dbReference>
<dbReference type="SMR" id="A8EZD2"/>
<dbReference type="STRING" id="293613.A1E_03940"/>
<dbReference type="KEGG" id="rcm:A1E_03940"/>
<dbReference type="eggNOG" id="COG1220">
    <property type="taxonomic scope" value="Bacteria"/>
</dbReference>
<dbReference type="HOGENOM" id="CLU_033123_0_0_5"/>
<dbReference type="Proteomes" id="UP000007056">
    <property type="component" value="Chromosome"/>
</dbReference>
<dbReference type="GO" id="GO:0009376">
    <property type="term" value="C:HslUV protease complex"/>
    <property type="evidence" value="ECO:0007669"/>
    <property type="project" value="UniProtKB-UniRule"/>
</dbReference>
<dbReference type="GO" id="GO:0005524">
    <property type="term" value="F:ATP binding"/>
    <property type="evidence" value="ECO:0007669"/>
    <property type="project" value="UniProtKB-UniRule"/>
</dbReference>
<dbReference type="GO" id="GO:0016887">
    <property type="term" value="F:ATP hydrolysis activity"/>
    <property type="evidence" value="ECO:0007669"/>
    <property type="project" value="InterPro"/>
</dbReference>
<dbReference type="GO" id="GO:0008233">
    <property type="term" value="F:peptidase activity"/>
    <property type="evidence" value="ECO:0007669"/>
    <property type="project" value="InterPro"/>
</dbReference>
<dbReference type="GO" id="GO:0036402">
    <property type="term" value="F:proteasome-activating activity"/>
    <property type="evidence" value="ECO:0007669"/>
    <property type="project" value="UniProtKB-UniRule"/>
</dbReference>
<dbReference type="GO" id="GO:0043335">
    <property type="term" value="P:protein unfolding"/>
    <property type="evidence" value="ECO:0007669"/>
    <property type="project" value="UniProtKB-UniRule"/>
</dbReference>
<dbReference type="GO" id="GO:0051603">
    <property type="term" value="P:proteolysis involved in protein catabolic process"/>
    <property type="evidence" value="ECO:0007669"/>
    <property type="project" value="TreeGrafter"/>
</dbReference>
<dbReference type="CDD" id="cd19498">
    <property type="entry name" value="RecA-like_HslU"/>
    <property type="match status" value="1"/>
</dbReference>
<dbReference type="Gene3D" id="1.10.8.60">
    <property type="match status" value="1"/>
</dbReference>
<dbReference type="Gene3D" id="3.40.50.300">
    <property type="entry name" value="P-loop containing nucleotide triphosphate hydrolases"/>
    <property type="match status" value="2"/>
</dbReference>
<dbReference type="HAMAP" id="MF_00249">
    <property type="entry name" value="HslU"/>
    <property type="match status" value="1"/>
</dbReference>
<dbReference type="InterPro" id="IPR003593">
    <property type="entry name" value="AAA+_ATPase"/>
</dbReference>
<dbReference type="InterPro" id="IPR050052">
    <property type="entry name" value="ATP-dep_Clp_protease_ClpX"/>
</dbReference>
<dbReference type="InterPro" id="IPR003959">
    <property type="entry name" value="ATPase_AAA_core"/>
</dbReference>
<dbReference type="InterPro" id="IPR019489">
    <property type="entry name" value="Clp_ATPase_C"/>
</dbReference>
<dbReference type="InterPro" id="IPR004491">
    <property type="entry name" value="HslU"/>
</dbReference>
<dbReference type="InterPro" id="IPR027417">
    <property type="entry name" value="P-loop_NTPase"/>
</dbReference>
<dbReference type="NCBIfam" id="TIGR00390">
    <property type="entry name" value="hslU"/>
    <property type="match status" value="1"/>
</dbReference>
<dbReference type="NCBIfam" id="NF003544">
    <property type="entry name" value="PRK05201.1"/>
    <property type="match status" value="1"/>
</dbReference>
<dbReference type="PANTHER" id="PTHR48102">
    <property type="entry name" value="ATP-DEPENDENT CLP PROTEASE ATP-BINDING SUBUNIT CLPX-LIKE, MITOCHONDRIAL-RELATED"/>
    <property type="match status" value="1"/>
</dbReference>
<dbReference type="PANTHER" id="PTHR48102:SF3">
    <property type="entry name" value="ATP-DEPENDENT PROTEASE ATPASE SUBUNIT HSLU"/>
    <property type="match status" value="1"/>
</dbReference>
<dbReference type="Pfam" id="PF00004">
    <property type="entry name" value="AAA"/>
    <property type="match status" value="1"/>
</dbReference>
<dbReference type="Pfam" id="PF07724">
    <property type="entry name" value="AAA_2"/>
    <property type="match status" value="1"/>
</dbReference>
<dbReference type="SMART" id="SM00382">
    <property type="entry name" value="AAA"/>
    <property type="match status" value="1"/>
</dbReference>
<dbReference type="SMART" id="SM01086">
    <property type="entry name" value="ClpB_D2-small"/>
    <property type="match status" value="1"/>
</dbReference>
<dbReference type="SUPFAM" id="SSF52540">
    <property type="entry name" value="P-loop containing nucleoside triphosphate hydrolases"/>
    <property type="match status" value="1"/>
</dbReference>
<accession>A8EZD2</accession>
<keyword id="KW-0067">ATP-binding</keyword>
<keyword id="KW-0143">Chaperone</keyword>
<keyword id="KW-0963">Cytoplasm</keyword>
<keyword id="KW-0547">Nucleotide-binding</keyword>
<sequence>MKATKITYKKDPMGLTPAQIVNELNRFIVGQEKAKKAVAIALRNRCRRKRVEGNLRNEIVPKNILMIGSTGVGKTEIARRLAKLTNSPFYKIEATKFTEVGYVGRDVESIIRDLVEIAVNTEKTLAKTEVDINAREKAIERILDSLVGKTSSSETREKFKEKVLNGELNDTEIEISVADTAPIGGGSFEIPGMPGSSMGVLNLGDMIGRALGSSKTKTKKMLVKEAMAIIIPEELEKLIDQEKIIQQAITLAENDGIVFIDEIDKIASAPSSGAKNAEISREGVQRDLLPLIEGTTVNTKYGQVKTDHILFIASGAFHIAKPSDLLPELQGRLPIRVELNSLTKDDMIKILLEPETSLIKQYSALIGTEDVHLEFTASAIEKIADYAITVNLEVEDIGARRLHTILENLLEDISFEASEMKGKKITIDDQFVENQLSKIITNLDLAKFIL</sequence>
<gene>
    <name evidence="1" type="primary">hslU</name>
    <name type="ordered locus">A1E_03940</name>
</gene>
<proteinExistence type="inferred from homology"/>
<evidence type="ECO:0000255" key="1">
    <source>
        <dbReference type="HAMAP-Rule" id="MF_00249"/>
    </source>
</evidence>
<comment type="function">
    <text evidence="1">ATPase subunit of a proteasome-like degradation complex; this subunit has chaperone activity. The binding of ATP and its subsequent hydrolysis by HslU are essential for unfolding of protein substrates subsequently hydrolyzed by HslV. HslU recognizes the N-terminal part of its protein substrates and unfolds these before they are guided to HslV for hydrolysis.</text>
</comment>
<comment type="subunit">
    <text evidence="1">A double ring-shaped homohexamer of HslV is capped on each side by a ring-shaped HslU homohexamer. The assembly of the HslU/HslV complex is dependent on binding of ATP.</text>
</comment>
<comment type="subcellular location">
    <subcellularLocation>
        <location evidence="1">Cytoplasm</location>
    </subcellularLocation>
</comment>
<comment type="similarity">
    <text evidence="1">Belongs to the ClpX chaperone family. HslU subfamily.</text>
</comment>